<reference key="1">
    <citation type="journal article" date="1997" name="Genetics">
        <title>DNA sequence analysis of Sry alleles (subgenus Mus) implicates misregulation as the cause of C57BL/6J-Y(POS) sex reversal and defines the SRY functional unit.</title>
        <authorList>
            <person name="Albrecht K.H."/>
            <person name="Eicher E.M."/>
        </authorList>
    </citation>
    <scope>NUCLEOTIDE SEQUENCE [GENOMIC DNA]</scope>
</reference>
<reference key="2">
    <citation type="journal article" date="1993" name="Nature">
        <title>Rapid evolution of the sex determining locus in Old World mice and rats.</title>
        <authorList>
            <person name="Tucker P.K."/>
            <person name="Lundrigan B.L."/>
        </authorList>
    </citation>
    <scope>NUCLEOTIDE SEQUENCE [GENOMIC DNA] OF 1-143</scope>
</reference>
<organism>
    <name type="scientific">Mus spretus</name>
    <name type="common">Western Mediterranean mouse</name>
    <name type="synonym">Algerian mouse</name>
    <dbReference type="NCBI Taxonomy" id="10096"/>
    <lineage>
        <taxon>Eukaryota</taxon>
        <taxon>Metazoa</taxon>
        <taxon>Chordata</taxon>
        <taxon>Craniata</taxon>
        <taxon>Vertebrata</taxon>
        <taxon>Euteleostomi</taxon>
        <taxon>Mammalia</taxon>
        <taxon>Eutheria</taxon>
        <taxon>Euarchontoglires</taxon>
        <taxon>Glires</taxon>
        <taxon>Rodentia</taxon>
        <taxon>Myomorpha</taxon>
        <taxon>Muroidea</taxon>
        <taxon>Muridae</taxon>
        <taxon>Murinae</taxon>
        <taxon>Mus</taxon>
        <taxon>Mus</taxon>
    </lineage>
</organism>
<proteinExistence type="inferred from homology"/>
<feature type="chain" id="PRO_0000048689" description="Sex-determining region Y protein">
    <location>
        <begin position="1"/>
        <end position="355"/>
    </location>
</feature>
<feature type="DNA-binding region" description="HMG box" evidence="3">
    <location>
        <begin position="5"/>
        <end position="73"/>
    </location>
</feature>
<feature type="region of interest" description="Disordered" evidence="4">
    <location>
        <begin position="135"/>
        <end position="322"/>
    </location>
</feature>
<feature type="compositionally biased region" description="Basic and acidic residues" evidence="4">
    <location>
        <begin position="159"/>
        <end position="204"/>
    </location>
</feature>
<feature type="compositionally biased region" description="Basic and acidic residues" evidence="4">
    <location>
        <begin position="235"/>
        <end position="250"/>
    </location>
</feature>
<feature type="compositionally biased region" description="Basic and acidic residues" evidence="4">
    <location>
        <begin position="257"/>
        <end position="278"/>
    </location>
</feature>
<feature type="compositionally biased region" description="Basic and acidic residues" evidence="4">
    <location>
        <begin position="289"/>
        <end position="314"/>
    </location>
</feature>
<feature type="sequence variant">
    <original>K</original>
    <variation>R</variation>
    <location>
        <position position="274"/>
    </location>
</feature>
<sequence length="355" mass="44260">MEGHVKRPMNAFMVWSRGERHKLAQQNPSMQNTEISKQLGCRWKSLTEAEKRPFFQEAQRLKTLHREKYPNYKYQPHRRAKVSQRSGILQPRVASTKLYNLLQWDRNPHAITYRQDWSRAAHLYSKNQQSFYLQPVDIPTGHPQQQQQQFHNHHQQKQQFHDHHQQKQQFHDHHQQQQQFHDHQQQQQQFHDHQQQKQQFHDHQQQQQQFHDHHHQQQQQQFHDHHHHQQQQQQFHDHHQQKQQFHDHHQQQQQQQFHDHPQQQQQFHDHPQQKQQFHDHHHHQQQKQQFHDHHQQKQQFHDHHQQQQQFHDHQQQQQQQQFHDQQLTYLLTADITGEHTPYQEHLSKALWLAVS</sequence>
<dbReference type="EMBL" id="U70659">
    <property type="protein sequence ID" value="AAC53449.1"/>
    <property type="molecule type" value="Genomic_DNA"/>
</dbReference>
<dbReference type="EMBL" id="AF009521">
    <property type="protein sequence ID" value="AAC53452.1"/>
    <property type="molecule type" value="Genomic_DNA"/>
</dbReference>
<dbReference type="EMBL" id="L29544">
    <property type="protein sequence ID" value="AAA40102.1"/>
    <property type="molecule type" value="Genomic_DNA"/>
</dbReference>
<dbReference type="PIR" id="T47235">
    <property type="entry name" value="T47235"/>
</dbReference>
<dbReference type="SMR" id="Q62563"/>
<dbReference type="MGI" id="MGI:98660">
    <property type="gene designation" value="Sry"/>
</dbReference>
<dbReference type="GO" id="GO:0005737">
    <property type="term" value="C:cytoplasm"/>
    <property type="evidence" value="ECO:0007669"/>
    <property type="project" value="UniProtKB-SubCell"/>
</dbReference>
<dbReference type="GO" id="GO:0016607">
    <property type="term" value="C:nuclear speck"/>
    <property type="evidence" value="ECO:0007669"/>
    <property type="project" value="UniProtKB-SubCell"/>
</dbReference>
<dbReference type="GO" id="GO:0005516">
    <property type="term" value="F:calmodulin binding"/>
    <property type="evidence" value="ECO:0007669"/>
    <property type="project" value="UniProtKB-KW"/>
</dbReference>
<dbReference type="GO" id="GO:0001228">
    <property type="term" value="F:DNA-binding transcription activator activity, RNA polymerase II-specific"/>
    <property type="evidence" value="ECO:0007669"/>
    <property type="project" value="TreeGrafter"/>
</dbReference>
<dbReference type="GO" id="GO:0000978">
    <property type="term" value="F:RNA polymerase II cis-regulatory region sequence-specific DNA binding"/>
    <property type="evidence" value="ECO:0007669"/>
    <property type="project" value="TreeGrafter"/>
</dbReference>
<dbReference type="GO" id="GO:0030154">
    <property type="term" value="P:cell differentiation"/>
    <property type="evidence" value="ECO:0007669"/>
    <property type="project" value="UniProtKB-KW"/>
</dbReference>
<dbReference type="GO" id="GO:0010628">
    <property type="term" value="P:positive regulation of gene expression"/>
    <property type="evidence" value="ECO:0000250"/>
    <property type="project" value="UniProtKB"/>
</dbReference>
<dbReference type="GO" id="GO:0007548">
    <property type="term" value="P:sex differentiation"/>
    <property type="evidence" value="ECO:0007669"/>
    <property type="project" value="UniProtKB-KW"/>
</dbReference>
<dbReference type="CDD" id="cd22028">
    <property type="entry name" value="HMG-box_SoxA_SoxB_SoxG"/>
    <property type="match status" value="1"/>
</dbReference>
<dbReference type="FunFam" id="1.10.30.10:FF:000002">
    <property type="entry name" value="transcription factor Sox-2"/>
    <property type="match status" value="1"/>
</dbReference>
<dbReference type="Gene3D" id="1.10.30.10">
    <property type="entry name" value="High mobility group box domain"/>
    <property type="match status" value="1"/>
</dbReference>
<dbReference type="InterPro" id="IPR009071">
    <property type="entry name" value="HMG_box_dom"/>
</dbReference>
<dbReference type="InterPro" id="IPR036910">
    <property type="entry name" value="HMG_box_dom_sf"/>
</dbReference>
<dbReference type="InterPro" id="IPR050140">
    <property type="entry name" value="SRY-related_HMG-box_TF-like"/>
</dbReference>
<dbReference type="PANTHER" id="PTHR10270:SF161">
    <property type="entry name" value="SEX-DETERMINING REGION Y PROTEIN"/>
    <property type="match status" value="1"/>
</dbReference>
<dbReference type="PANTHER" id="PTHR10270">
    <property type="entry name" value="SOX TRANSCRIPTION FACTOR"/>
    <property type="match status" value="1"/>
</dbReference>
<dbReference type="Pfam" id="PF00505">
    <property type="entry name" value="HMG_box"/>
    <property type="match status" value="1"/>
</dbReference>
<dbReference type="SMART" id="SM00398">
    <property type="entry name" value="HMG"/>
    <property type="match status" value="1"/>
</dbReference>
<dbReference type="SUPFAM" id="SSF47095">
    <property type="entry name" value="HMG-box"/>
    <property type="match status" value="1"/>
</dbReference>
<dbReference type="PROSITE" id="PS50118">
    <property type="entry name" value="HMG_BOX_2"/>
    <property type="match status" value="1"/>
</dbReference>
<accession>Q62563</accession>
<keyword id="KW-0007">Acetylation</keyword>
<keyword id="KW-0010">Activator</keyword>
<keyword id="KW-0112">Calmodulin-binding</keyword>
<keyword id="KW-0963">Cytoplasm</keyword>
<keyword id="KW-0221">Differentiation</keyword>
<keyword id="KW-0238">DNA-binding</keyword>
<keyword id="KW-0539">Nucleus</keyword>
<keyword id="KW-0677">Repeat</keyword>
<keyword id="KW-0726">Sexual differentiation</keyword>
<keyword id="KW-0804">Transcription</keyword>
<keyword id="KW-0805">Transcription regulation</keyword>
<evidence type="ECO:0000250" key="1">
    <source>
        <dbReference type="UniProtKB" id="P36394"/>
    </source>
</evidence>
<evidence type="ECO:0000250" key="2">
    <source>
        <dbReference type="UniProtKB" id="Q05066"/>
    </source>
</evidence>
<evidence type="ECO:0000255" key="3">
    <source>
        <dbReference type="PROSITE-ProRule" id="PRU00267"/>
    </source>
</evidence>
<evidence type="ECO:0000256" key="4">
    <source>
        <dbReference type="SAM" id="MobiDB-lite"/>
    </source>
</evidence>
<evidence type="ECO:0000305" key="5"/>
<name>SRY_MUSSP</name>
<gene>
    <name type="primary">Sry</name>
    <name type="synonym">Tdf</name>
</gene>
<comment type="function">
    <text evidence="1 2">Transcriptional regulator that controls a genetic switch in male development. It is necessary and sufficient for initiating male sex determination by directing the development of supporting cell precursors (pre-Sertoli cells) as Sertoli rather than granulosa cells. Involved in different aspects of gene regulation including promoter activation or repression. Binds to the DNA consensus sequence 5'-[AT]AACAA[AT]-3'. SRY HMG box recognizes DNA by partial intercalation in the minor groove and promotes DNA bending. Also involved in pre-mRNA splicing (By similarity). In male adult brain involved in the maintenance of motor functions of dopaminergic neurons (By similarity).</text>
</comment>
<comment type="subunit">
    <text evidence="2">Interacts with CALM, EP300, HDAC3, KPNB1, ZNF208 isoform KRAB-O, PARP1, SLC9A3R2 and WT1. The interaction with EP300 modulates its DNA-binding activity. The interaction with KPNB1 is sensitive to dissociation by Ran in the GTP-bound form. Interaction with PARP1 impaired its DNA-binding activity.</text>
</comment>
<comment type="subcellular location">
    <subcellularLocation>
        <location evidence="2">Nucleus speckle</location>
    </subcellularLocation>
    <subcellularLocation>
        <location evidence="2">Cytoplasm</location>
    </subcellularLocation>
    <subcellularLocation>
        <location evidence="2">Nucleus</location>
    </subcellularLocation>
</comment>
<comment type="domain">
    <text>The Gln- and His-rich domain may mediate protein-protein interactions.</text>
</comment>
<comment type="PTM">
    <text evidence="2">Acetylation of Lys-81 contributes to its nuclear localization and enhances its interaction with KPNB1. Deacetylated by HDAC3.</text>
</comment>
<comment type="similarity">
    <text evidence="5">Belongs to the SRY family.</text>
</comment>
<comment type="online information" name="Protein Spotlight">
    <link uri="https://www.proteinspotlight.org/back_issues/080"/>
    <text>The tenuous nature of sex - Issue 80 of March 2007</text>
</comment>
<protein>
    <recommendedName>
        <fullName>Sex-determining region Y protein</fullName>
    </recommendedName>
    <alternativeName>
        <fullName>Testis-determining factor</fullName>
    </alternativeName>
</protein>